<gene>
    <name evidence="1" type="primary">cysG</name>
    <name type="ordered locus">ZMO0006</name>
</gene>
<accession>Q5NRM4</accession>
<organism>
    <name type="scientific">Zymomonas mobilis subsp. mobilis (strain ATCC 31821 / ZM4 / CP4)</name>
    <dbReference type="NCBI Taxonomy" id="264203"/>
    <lineage>
        <taxon>Bacteria</taxon>
        <taxon>Pseudomonadati</taxon>
        <taxon>Pseudomonadota</taxon>
        <taxon>Alphaproteobacteria</taxon>
        <taxon>Sphingomonadales</taxon>
        <taxon>Zymomonadaceae</taxon>
        <taxon>Zymomonas</taxon>
    </lineage>
</organism>
<feature type="chain" id="PRO_0000330582" description="Siroheme synthase">
    <location>
        <begin position="1"/>
        <end position="471"/>
    </location>
</feature>
<feature type="region of interest" description="Precorrin-2 dehydrogenase /sirohydrochlorin ferrochelatase" evidence="1">
    <location>
        <begin position="1"/>
        <end position="203"/>
    </location>
</feature>
<feature type="region of interest" description="Uroporphyrinogen-III C-methyltransferase" evidence="1">
    <location>
        <begin position="215"/>
        <end position="471"/>
    </location>
</feature>
<feature type="active site" description="Proton acceptor" evidence="1">
    <location>
        <position position="247"/>
    </location>
</feature>
<feature type="active site" description="Proton donor" evidence="1">
    <location>
        <position position="269"/>
    </location>
</feature>
<feature type="binding site" evidence="1">
    <location>
        <begin position="22"/>
        <end position="23"/>
    </location>
    <ligand>
        <name>NAD(+)</name>
        <dbReference type="ChEBI" id="CHEBI:57540"/>
    </ligand>
</feature>
<feature type="binding site" evidence="1">
    <location>
        <begin position="43"/>
        <end position="44"/>
    </location>
    <ligand>
        <name>NAD(+)</name>
        <dbReference type="ChEBI" id="CHEBI:57540"/>
    </ligand>
</feature>
<feature type="binding site" evidence="1">
    <location>
        <position position="224"/>
    </location>
    <ligand>
        <name>S-adenosyl-L-methionine</name>
        <dbReference type="ChEBI" id="CHEBI:59789"/>
    </ligand>
</feature>
<feature type="binding site" evidence="1">
    <location>
        <begin position="300"/>
        <end position="302"/>
    </location>
    <ligand>
        <name>S-adenosyl-L-methionine</name>
        <dbReference type="ChEBI" id="CHEBI:59789"/>
    </ligand>
</feature>
<feature type="binding site" evidence="1">
    <location>
        <position position="305"/>
    </location>
    <ligand>
        <name>S-adenosyl-L-methionine</name>
        <dbReference type="ChEBI" id="CHEBI:59789"/>
    </ligand>
</feature>
<feature type="binding site" evidence="1">
    <location>
        <begin position="330"/>
        <end position="331"/>
    </location>
    <ligand>
        <name>S-adenosyl-L-methionine</name>
        <dbReference type="ChEBI" id="CHEBI:59789"/>
    </ligand>
</feature>
<feature type="binding site" evidence="1">
    <location>
        <position position="382"/>
    </location>
    <ligand>
        <name>S-adenosyl-L-methionine</name>
        <dbReference type="ChEBI" id="CHEBI:59789"/>
    </ligand>
</feature>
<feature type="binding site" evidence="1">
    <location>
        <position position="411"/>
    </location>
    <ligand>
        <name>S-adenosyl-L-methionine</name>
        <dbReference type="ChEBI" id="CHEBI:59789"/>
    </ligand>
</feature>
<feature type="modified residue" description="Phosphoserine" evidence="1">
    <location>
        <position position="128"/>
    </location>
</feature>
<proteinExistence type="inferred from homology"/>
<evidence type="ECO:0000255" key="1">
    <source>
        <dbReference type="HAMAP-Rule" id="MF_01646"/>
    </source>
</evidence>
<dbReference type="EC" id="2.1.1.107" evidence="1"/>
<dbReference type="EC" id="1.3.1.76" evidence="1"/>
<dbReference type="EC" id="4.99.1.4" evidence="1"/>
<dbReference type="EMBL" id="AE008692">
    <property type="protein sequence ID" value="AAV88630.1"/>
    <property type="molecule type" value="Genomic_DNA"/>
</dbReference>
<dbReference type="RefSeq" id="WP_011239994.1">
    <property type="nucleotide sequence ID" value="NZ_CP035711.1"/>
</dbReference>
<dbReference type="SMR" id="Q5NRM4"/>
<dbReference type="STRING" id="264203.ZMO0006"/>
<dbReference type="KEGG" id="zmo:ZMO0006"/>
<dbReference type="eggNOG" id="COG0007">
    <property type="taxonomic scope" value="Bacteria"/>
</dbReference>
<dbReference type="eggNOG" id="COG1648">
    <property type="taxonomic scope" value="Bacteria"/>
</dbReference>
<dbReference type="HOGENOM" id="CLU_011276_2_0_5"/>
<dbReference type="UniPathway" id="UPA00148">
    <property type="reaction ID" value="UER00211"/>
</dbReference>
<dbReference type="UniPathway" id="UPA00148">
    <property type="reaction ID" value="UER00222"/>
</dbReference>
<dbReference type="UniPathway" id="UPA00262">
    <property type="reaction ID" value="UER00211"/>
</dbReference>
<dbReference type="UniPathway" id="UPA00262">
    <property type="reaction ID" value="UER00222"/>
</dbReference>
<dbReference type="UniPathway" id="UPA00262">
    <property type="reaction ID" value="UER00376"/>
</dbReference>
<dbReference type="Proteomes" id="UP000001173">
    <property type="component" value="Chromosome"/>
</dbReference>
<dbReference type="GO" id="GO:0051287">
    <property type="term" value="F:NAD binding"/>
    <property type="evidence" value="ECO:0007669"/>
    <property type="project" value="InterPro"/>
</dbReference>
<dbReference type="GO" id="GO:0043115">
    <property type="term" value="F:precorrin-2 dehydrogenase activity"/>
    <property type="evidence" value="ECO:0007669"/>
    <property type="project" value="UniProtKB-UniRule"/>
</dbReference>
<dbReference type="GO" id="GO:0051266">
    <property type="term" value="F:sirohydrochlorin ferrochelatase activity"/>
    <property type="evidence" value="ECO:0007669"/>
    <property type="project" value="UniProtKB-EC"/>
</dbReference>
<dbReference type="GO" id="GO:0004851">
    <property type="term" value="F:uroporphyrin-III C-methyltransferase activity"/>
    <property type="evidence" value="ECO:0007669"/>
    <property type="project" value="UniProtKB-UniRule"/>
</dbReference>
<dbReference type="GO" id="GO:0009236">
    <property type="term" value="P:cobalamin biosynthetic process"/>
    <property type="evidence" value="ECO:0007669"/>
    <property type="project" value="UniProtKB-UniRule"/>
</dbReference>
<dbReference type="GO" id="GO:0032259">
    <property type="term" value="P:methylation"/>
    <property type="evidence" value="ECO:0007669"/>
    <property type="project" value="UniProtKB-KW"/>
</dbReference>
<dbReference type="GO" id="GO:0019354">
    <property type="term" value="P:siroheme biosynthetic process"/>
    <property type="evidence" value="ECO:0007669"/>
    <property type="project" value="UniProtKB-UniRule"/>
</dbReference>
<dbReference type="CDD" id="cd11642">
    <property type="entry name" value="SUMT"/>
    <property type="match status" value="1"/>
</dbReference>
<dbReference type="FunFam" id="3.30.950.10:FF:000001">
    <property type="entry name" value="Siroheme synthase"/>
    <property type="match status" value="1"/>
</dbReference>
<dbReference type="FunFam" id="3.40.1010.10:FF:000001">
    <property type="entry name" value="Siroheme synthase"/>
    <property type="match status" value="1"/>
</dbReference>
<dbReference type="Gene3D" id="3.40.1010.10">
    <property type="entry name" value="Cobalt-precorrin-4 Transmethylase, Domain 1"/>
    <property type="match status" value="1"/>
</dbReference>
<dbReference type="Gene3D" id="3.30.950.10">
    <property type="entry name" value="Methyltransferase, Cobalt-precorrin-4 Transmethylase, Domain 2"/>
    <property type="match status" value="1"/>
</dbReference>
<dbReference type="Gene3D" id="3.40.50.720">
    <property type="entry name" value="NAD(P)-binding Rossmann-like Domain"/>
    <property type="match status" value="1"/>
</dbReference>
<dbReference type="Gene3D" id="1.10.8.210">
    <property type="entry name" value="Sirohaem synthase, dimerisation domain"/>
    <property type="match status" value="1"/>
</dbReference>
<dbReference type="Gene3D" id="3.30.160.110">
    <property type="entry name" value="Siroheme synthase, domain 2"/>
    <property type="match status" value="1"/>
</dbReference>
<dbReference type="HAMAP" id="MF_01646">
    <property type="entry name" value="Siroheme_synth"/>
    <property type="match status" value="1"/>
</dbReference>
<dbReference type="InterPro" id="IPR000878">
    <property type="entry name" value="4pyrrol_Mease"/>
</dbReference>
<dbReference type="InterPro" id="IPR035996">
    <property type="entry name" value="4pyrrol_Methylase_sf"/>
</dbReference>
<dbReference type="InterPro" id="IPR014777">
    <property type="entry name" value="4pyrrole_Mease_sub1"/>
</dbReference>
<dbReference type="InterPro" id="IPR014776">
    <property type="entry name" value="4pyrrole_Mease_sub2"/>
</dbReference>
<dbReference type="InterPro" id="IPR006366">
    <property type="entry name" value="CobA/CysG_C"/>
</dbReference>
<dbReference type="InterPro" id="IPR036291">
    <property type="entry name" value="NAD(P)-bd_dom_sf"/>
</dbReference>
<dbReference type="InterPro" id="IPR050161">
    <property type="entry name" value="Siro_Cobalamin_biosynth"/>
</dbReference>
<dbReference type="InterPro" id="IPR037115">
    <property type="entry name" value="Sirohaem_synt_dimer_dom_sf"/>
</dbReference>
<dbReference type="InterPro" id="IPR012409">
    <property type="entry name" value="Sirohaem_synth"/>
</dbReference>
<dbReference type="InterPro" id="IPR019478">
    <property type="entry name" value="Sirohaem_synthase_dimer_dom"/>
</dbReference>
<dbReference type="InterPro" id="IPR006367">
    <property type="entry name" value="Sirohaem_synthase_N"/>
</dbReference>
<dbReference type="InterPro" id="IPR003043">
    <property type="entry name" value="Uropor_MeTrfase_CS"/>
</dbReference>
<dbReference type="NCBIfam" id="TIGR01469">
    <property type="entry name" value="cobA_cysG_Cterm"/>
    <property type="match status" value="1"/>
</dbReference>
<dbReference type="NCBIfam" id="TIGR01470">
    <property type="entry name" value="cysG_Nterm"/>
    <property type="match status" value="1"/>
</dbReference>
<dbReference type="NCBIfam" id="NF004790">
    <property type="entry name" value="PRK06136.1"/>
    <property type="match status" value="1"/>
</dbReference>
<dbReference type="NCBIfam" id="NF007922">
    <property type="entry name" value="PRK10637.1"/>
    <property type="match status" value="1"/>
</dbReference>
<dbReference type="PANTHER" id="PTHR45790:SF1">
    <property type="entry name" value="SIROHEME SYNTHASE"/>
    <property type="match status" value="1"/>
</dbReference>
<dbReference type="PANTHER" id="PTHR45790">
    <property type="entry name" value="SIROHEME SYNTHASE-RELATED"/>
    <property type="match status" value="1"/>
</dbReference>
<dbReference type="Pfam" id="PF10414">
    <property type="entry name" value="CysG_dimeriser"/>
    <property type="match status" value="1"/>
</dbReference>
<dbReference type="Pfam" id="PF13241">
    <property type="entry name" value="NAD_binding_7"/>
    <property type="match status" value="1"/>
</dbReference>
<dbReference type="Pfam" id="PF00590">
    <property type="entry name" value="TP_methylase"/>
    <property type="match status" value="1"/>
</dbReference>
<dbReference type="PIRSF" id="PIRSF036426">
    <property type="entry name" value="Sirohaem_synth"/>
    <property type="match status" value="1"/>
</dbReference>
<dbReference type="SUPFAM" id="SSF51735">
    <property type="entry name" value="NAD(P)-binding Rossmann-fold domains"/>
    <property type="match status" value="1"/>
</dbReference>
<dbReference type="SUPFAM" id="SSF75615">
    <property type="entry name" value="Siroheme synthase middle domains-like"/>
    <property type="match status" value="1"/>
</dbReference>
<dbReference type="SUPFAM" id="SSF53790">
    <property type="entry name" value="Tetrapyrrole methylase"/>
    <property type="match status" value="1"/>
</dbReference>
<dbReference type="PROSITE" id="PS00839">
    <property type="entry name" value="SUMT_1"/>
    <property type="match status" value="1"/>
</dbReference>
<dbReference type="PROSITE" id="PS00840">
    <property type="entry name" value="SUMT_2"/>
    <property type="match status" value="1"/>
</dbReference>
<name>CYSG_ZYMMO</name>
<protein>
    <recommendedName>
        <fullName evidence="1">Siroheme synthase</fullName>
    </recommendedName>
    <domain>
        <recommendedName>
            <fullName evidence="1">Uroporphyrinogen-III C-methyltransferase</fullName>
            <shortName evidence="1">Urogen III methylase</shortName>
            <ecNumber evidence="1">2.1.1.107</ecNumber>
        </recommendedName>
        <alternativeName>
            <fullName evidence="1">SUMT</fullName>
        </alternativeName>
        <alternativeName>
            <fullName evidence="1">Uroporphyrinogen III methylase</fullName>
            <shortName evidence="1">UROM</shortName>
        </alternativeName>
    </domain>
    <domain>
        <recommendedName>
            <fullName evidence="1">Precorrin-2 dehydrogenase</fullName>
            <ecNumber evidence="1">1.3.1.76</ecNumber>
        </recommendedName>
    </domain>
    <domain>
        <recommendedName>
            <fullName evidence="1">Sirohydrochlorin ferrochelatase</fullName>
            <ecNumber evidence="1">4.99.1.4</ecNumber>
        </recommendedName>
    </domain>
</protein>
<reference key="1">
    <citation type="journal article" date="2005" name="Nat. Biotechnol.">
        <title>The genome sequence of the ethanologenic bacterium Zymomonas mobilis ZM4.</title>
        <authorList>
            <person name="Seo J.-S."/>
            <person name="Chong H."/>
            <person name="Park H.S."/>
            <person name="Yoon K.-O."/>
            <person name="Jung C."/>
            <person name="Kim J.J."/>
            <person name="Hong J.H."/>
            <person name="Kim H."/>
            <person name="Kim J.-H."/>
            <person name="Kil J.-I."/>
            <person name="Park C.J."/>
            <person name="Oh H.-M."/>
            <person name="Lee J.-S."/>
            <person name="Jin S.-J."/>
            <person name="Um H.-W."/>
            <person name="Lee H.-J."/>
            <person name="Oh S.-J."/>
            <person name="Kim J.Y."/>
            <person name="Kang H.L."/>
            <person name="Lee S.Y."/>
            <person name="Lee K.J."/>
            <person name="Kang H.S."/>
        </authorList>
    </citation>
    <scope>NUCLEOTIDE SEQUENCE [LARGE SCALE GENOMIC DNA]</scope>
    <source>
        <strain>ATCC 31821 / ZM4 / CP4</strain>
    </source>
</reference>
<sequence>MDYLPLFADIRQRPVLVVGGGEVAARKVALLKKAGAIIKIVAKNIHPELQILQENHEIEWLAKSFSPEQLDHVFLVIAATNDSLLNQQIYQAAEQRHRLVNVVDDQQKCSFIFPSIVDRAPITLALSSAGTSPVLVRMLREKLEALLPQSLGKMAEIAGKWRPRIKEKLPAIKDRRLFWEKAFNGLFAHKVASGDWESAEKTLAEQLEKDNPKQGEIILVGAGPGDAGLLTLRGLQALQQADIVLYDYLVSPAVLEMIRRDAQKICVGKRAGHHSVAQEETNRRLIEWAQQGKKVVRLKGGDPFIFGRGGEELQAAKQASIPFQVVPGITAASGAAAYAGIPLTHRDYSQNVVFITGHCQKDGNGLDWATLARPHQTLVIYMGVMNAGKISEALIKHGRKADTPVAIIAHATLPNQQILNGRLDQLESLAKQAETPALLIIGEVGGLQSDLSWFSSKTDKEDTKSSLINLA</sequence>
<comment type="function">
    <text evidence="1">Multifunctional enzyme that catalyzes the SAM-dependent methylations of uroporphyrinogen III at position C-2 and C-7 to form precorrin-2 via precorrin-1. Then it catalyzes the NAD-dependent ring dehydrogenation of precorrin-2 to yield sirohydrochlorin. Finally, it catalyzes the ferrochelation of sirohydrochlorin to yield siroheme.</text>
</comment>
<comment type="catalytic activity">
    <reaction evidence="1">
        <text>uroporphyrinogen III + 2 S-adenosyl-L-methionine = precorrin-2 + 2 S-adenosyl-L-homocysteine + H(+)</text>
        <dbReference type="Rhea" id="RHEA:32459"/>
        <dbReference type="ChEBI" id="CHEBI:15378"/>
        <dbReference type="ChEBI" id="CHEBI:57308"/>
        <dbReference type="ChEBI" id="CHEBI:57856"/>
        <dbReference type="ChEBI" id="CHEBI:58827"/>
        <dbReference type="ChEBI" id="CHEBI:59789"/>
        <dbReference type="EC" id="2.1.1.107"/>
    </reaction>
</comment>
<comment type="catalytic activity">
    <reaction evidence="1">
        <text>precorrin-2 + NAD(+) = sirohydrochlorin + NADH + 2 H(+)</text>
        <dbReference type="Rhea" id="RHEA:15613"/>
        <dbReference type="ChEBI" id="CHEBI:15378"/>
        <dbReference type="ChEBI" id="CHEBI:57540"/>
        <dbReference type="ChEBI" id="CHEBI:57945"/>
        <dbReference type="ChEBI" id="CHEBI:58351"/>
        <dbReference type="ChEBI" id="CHEBI:58827"/>
        <dbReference type="EC" id="1.3.1.76"/>
    </reaction>
</comment>
<comment type="catalytic activity">
    <reaction evidence="1">
        <text>siroheme + 2 H(+) = sirohydrochlorin + Fe(2+)</text>
        <dbReference type="Rhea" id="RHEA:24360"/>
        <dbReference type="ChEBI" id="CHEBI:15378"/>
        <dbReference type="ChEBI" id="CHEBI:29033"/>
        <dbReference type="ChEBI" id="CHEBI:58351"/>
        <dbReference type="ChEBI" id="CHEBI:60052"/>
        <dbReference type="EC" id="4.99.1.4"/>
    </reaction>
</comment>
<comment type="pathway">
    <text evidence="1">Cofactor biosynthesis; adenosylcobalamin biosynthesis; precorrin-2 from uroporphyrinogen III: step 1/1.</text>
</comment>
<comment type="pathway">
    <text evidence="1">Cofactor biosynthesis; adenosylcobalamin biosynthesis; sirohydrochlorin from precorrin-2: step 1/1.</text>
</comment>
<comment type="pathway">
    <text evidence="1">Porphyrin-containing compound metabolism; siroheme biosynthesis; precorrin-2 from uroporphyrinogen III: step 1/1.</text>
</comment>
<comment type="pathway">
    <text evidence="1">Porphyrin-containing compound metabolism; siroheme biosynthesis; siroheme from sirohydrochlorin: step 1/1.</text>
</comment>
<comment type="pathway">
    <text evidence="1">Porphyrin-containing compound metabolism; siroheme biosynthesis; sirohydrochlorin from precorrin-2: step 1/1.</text>
</comment>
<comment type="similarity">
    <text evidence="1">In the N-terminal section; belongs to the precorrin-2 dehydrogenase / sirohydrochlorin ferrochelatase family.</text>
</comment>
<comment type="similarity">
    <text evidence="1">In the C-terminal section; belongs to the precorrin methyltransferase family.</text>
</comment>
<keyword id="KW-0169">Cobalamin biosynthesis</keyword>
<keyword id="KW-0456">Lyase</keyword>
<keyword id="KW-0489">Methyltransferase</keyword>
<keyword id="KW-0511">Multifunctional enzyme</keyword>
<keyword id="KW-0520">NAD</keyword>
<keyword id="KW-0560">Oxidoreductase</keyword>
<keyword id="KW-0597">Phosphoprotein</keyword>
<keyword id="KW-0627">Porphyrin biosynthesis</keyword>
<keyword id="KW-1185">Reference proteome</keyword>
<keyword id="KW-0949">S-adenosyl-L-methionine</keyword>
<keyword id="KW-0808">Transferase</keyword>